<sequence length="20" mass="2246">VDDTTPLSEETMMRIGGYMV</sequence>
<comment type="function">
    <text>Gal / GalNAc-specific lectin. Agglutinates both native and trypsin-treated rabbit erythrocytes but not human erythrocytes irrespective of blood group type.</text>
</comment>
<comment type="subunit">
    <text>Disulfide-linked heterodimer of A and B chains.</text>
</comment>
<dbReference type="GO" id="GO:0030246">
    <property type="term" value="F:carbohydrate binding"/>
    <property type="evidence" value="ECO:0007669"/>
    <property type="project" value="UniProtKB-KW"/>
</dbReference>
<proteinExistence type="evidence at protein level"/>
<organism>
    <name type="scientific">Iris hollandica</name>
    <name type="common">Dutch iris</name>
    <name type="synonym">Iris tingitana x Iris xiphium</name>
    <dbReference type="NCBI Taxonomy" id="35876"/>
    <lineage>
        <taxon>Eukaryota</taxon>
        <taxon>Viridiplantae</taxon>
        <taxon>Streptophyta</taxon>
        <taxon>Embryophyta</taxon>
        <taxon>Tracheophyta</taxon>
        <taxon>Spermatophyta</taxon>
        <taxon>Magnoliopsida</taxon>
        <taxon>Liliopsida</taxon>
        <taxon>Asparagales</taxon>
        <taxon>Iridaceae</taxon>
        <taxon>Iridoideae</taxon>
        <taxon>Irideae</taxon>
        <taxon>Iris</taxon>
    </lineage>
</organism>
<reference key="1">
    <citation type="journal article" date="1994" name="J. Biol. Chem.">
        <title>Isolation and characterization of an N-acetyl-D-galactosamine-binding lectin from Dutch Iris bulbs which recognizes the blood group A disaccharide (GalNAc alpha 1-3Gal).</title>
        <authorList>
            <person name="Mo H."/>
            <person name="van Damme E.J.M."/>
            <person name="Peumans W.J."/>
            <person name="Goldstein I.J."/>
        </authorList>
    </citation>
    <scope>PROTEIN SEQUENCE</scope>
    <source>
        <strain>cv. Golden Harvest</strain>
        <strain>cv. Prof. Blaauw</strain>
        <tissue>Bulb</tissue>
    </source>
</reference>
<accession>P36231</accession>
<feature type="chain" id="PRO_0000221423" description="N-acetyl-D-galactosamine-binding lectin subunit B">
    <location>
        <begin position="1"/>
        <end position="20" status="greater than"/>
    </location>
</feature>
<feature type="non-terminal residue">
    <location>
        <position position="20"/>
    </location>
</feature>
<keyword id="KW-0903">Direct protein sequencing</keyword>
<keyword id="KW-1015">Disulfide bond</keyword>
<keyword id="KW-0430">Lectin</keyword>
<protein>
    <recommendedName>
        <fullName>N-acetyl-D-galactosamine-binding lectin subunit B</fullName>
    </recommendedName>
    <alternativeName>
        <fullName>A-disaccharide-binding lectin subunit B</fullName>
    </alternativeName>
</protein>
<name>LECB_IRIHO</name>